<gene>
    <name evidence="1" type="primary">murG</name>
    <name type="ordered locus">ESA_03248</name>
</gene>
<protein>
    <recommendedName>
        <fullName evidence="1">UDP-N-acetylglucosamine--N-acetylmuramyl-(pentapeptide) pyrophosphoryl-undecaprenol N-acetylglucosamine transferase</fullName>
        <ecNumber evidence="1">2.4.1.227</ecNumber>
    </recommendedName>
    <alternativeName>
        <fullName evidence="1">Undecaprenyl-PP-MurNAc-pentapeptide-UDPGlcNAc GlcNAc transferase</fullName>
    </alternativeName>
</protein>
<comment type="function">
    <text evidence="1">Cell wall formation. Catalyzes the transfer of a GlcNAc subunit on undecaprenyl-pyrophosphoryl-MurNAc-pentapeptide (lipid intermediate I) to form undecaprenyl-pyrophosphoryl-MurNAc-(pentapeptide)GlcNAc (lipid intermediate II).</text>
</comment>
<comment type="catalytic activity">
    <reaction evidence="1">
        <text>di-trans,octa-cis-undecaprenyl diphospho-N-acetyl-alpha-D-muramoyl-L-alanyl-D-glutamyl-meso-2,6-diaminopimeloyl-D-alanyl-D-alanine + UDP-N-acetyl-alpha-D-glucosamine = di-trans,octa-cis-undecaprenyl diphospho-[N-acetyl-alpha-D-glucosaminyl-(1-&gt;4)]-N-acetyl-alpha-D-muramoyl-L-alanyl-D-glutamyl-meso-2,6-diaminopimeloyl-D-alanyl-D-alanine + UDP + H(+)</text>
        <dbReference type="Rhea" id="RHEA:31227"/>
        <dbReference type="ChEBI" id="CHEBI:15378"/>
        <dbReference type="ChEBI" id="CHEBI:57705"/>
        <dbReference type="ChEBI" id="CHEBI:58223"/>
        <dbReference type="ChEBI" id="CHEBI:61387"/>
        <dbReference type="ChEBI" id="CHEBI:61388"/>
        <dbReference type="EC" id="2.4.1.227"/>
    </reaction>
</comment>
<comment type="pathway">
    <text evidence="1">Cell wall biogenesis; peptidoglycan biosynthesis.</text>
</comment>
<comment type="subcellular location">
    <subcellularLocation>
        <location evidence="1">Cell inner membrane</location>
        <topology evidence="1">Peripheral membrane protein</topology>
        <orientation evidence="1">Cytoplasmic side</orientation>
    </subcellularLocation>
</comment>
<comment type="similarity">
    <text evidence="1">Belongs to the glycosyltransferase 28 family. MurG subfamily.</text>
</comment>
<feature type="chain" id="PRO_1000002644" description="UDP-N-acetylglucosamine--N-acetylmuramyl-(pentapeptide) pyrophosphoryl-undecaprenol N-acetylglucosamine transferase">
    <location>
        <begin position="1"/>
        <end position="355"/>
    </location>
</feature>
<feature type="binding site" evidence="1">
    <location>
        <begin position="15"/>
        <end position="17"/>
    </location>
    <ligand>
        <name>UDP-N-acetyl-alpha-D-glucosamine</name>
        <dbReference type="ChEBI" id="CHEBI:57705"/>
    </ligand>
</feature>
<feature type="binding site" evidence="1">
    <location>
        <position position="127"/>
    </location>
    <ligand>
        <name>UDP-N-acetyl-alpha-D-glucosamine</name>
        <dbReference type="ChEBI" id="CHEBI:57705"/>
    </ligand>
</feature>
<feature type="binding site" evidence="1">
    <location>
        <position position="163"/>
    </location>
    <ligand>
        <name>UDP-N-acetyl-alpha-D-glucosamine</name>
        <dbReference type="ChEBI" id="CHEBI:57705"/>
    </ligand>
</feature>
<feature type="binding site" evidence="1">
    <location>
        <position position="191"/>
    </location>
    <ligand>
        <name>UDP-N-acetyl-alpha-D-glucosamine</name>
        <dbReference type="ChEBI" id="CHEBI:57705"/>
    </ligand>
</feature>
<feature type="binding site" evidence="1">
    <location>
        <position position="244"/>
    </location>
    <ligand>
        <name>UDP-N-acetyl-alpha-D-glucosamine</name>
        <dbReference type="ChEBI" id="CHEBI:57705"/>
    </ligand>
</feature>
<feature type="binding site" evidence="1">
    <location>
        <begin position="263"/>
        <end position="268"/>
    </location>
    <ligand>
        <name>UDP-N-acetyl-alpha-D-glucosamine</name>
        <dbReference type="ChEBI" id="CHEBI:57705"/>
    </ligand>
</feature>
<feature type="binding site" evidence="1">
    <location>
        <position position="288"/>
    </location>
    <ligand>
        <name>UDP-N-acetyl-alpha-D-glucosamine</name>
        <dbReference type="ChEBI" id="CHEBI:57705"/>
    </ligand>
</feature>
<keyword id="KW-0131">Cell cycle</keyword>
<keyword id="KW-0132">Cell division</keyword>
<keyword id="KW-0997">Cell inner membrane</keyword>
<keyword id="KW-1003">Cell membrane</keyword>
<keyword id="KW-0133">Cell shape</keyword>
<keyword id="KW-0961">Cell wall biogenesis/degradation</keyword>
<keyword id="KW-0328">Glycosyltransferase</keyword>
<keyword id="KW-0472">Membrane</keyword>
<keyword id="KW-0573">Peptidoglycan synthesis</keyword>
<keyword id="KW-1185">Reference proteome</keyword>
<keyword id="KW-0808">Transferase</keyword>
<accession>A7MIE5</accession>
<dbReference type="EC" id="2.4.1.227" evidence="1"/>
<dbReference type="EMBL" id="CP000783">
    <property type="protein sequence ID" value="ABU78470.1"/>
    <property type="molecule type" value="Genomic_DNA"/>
</dbReference>
<dbReference type="RefSeq" id="WP_012125764.1">
    <property type="nucleotide sequence ID" value="NC_009778.1"/>
</dbReference>
<dbReference type="SMR" id="A7MIE5"/>
<dbReference type="CAZy" id="GT28">
    <property type="family name" value="Glycosyltransferase Family 28"/>
</dbReference>
<dbReference type="KEGG" id="esa:ESA_03248"/>
<dbReference type="PATRIC" id="fig|290339.8.peg.2879"/>
<dbReference type="HOGENOM" id="CLU_037404_2_0_6"/>
<dbReference type="UniPathway" id="UPA00219"/>
<dbReference type="Proteomes" id="UP000000260">
    <property type="component" value="Chromosome"/>
</dbReference>
<dbReference type="GO" id="GO:0005886">
    <property type="term" value="C:plasma membrane"/>
    <property type="evidence" value="ECO:0007669"/>
    <property type="project" value="UniProtKB-SubCell"/>
</dbReference>
<dbReference type="GO" id="GO:0051991">
    <property type="term" value="F:UDP-N-acetyl-D-glucosamine:N-acetylmuramoyl-L-alanyl-D-glutamyl-meso-2,6-diaminopimelyl-D-alanyl-D-alanine-diphosphoundecaprenol 4-beta-N-acetylglucosaminlytransferase activity"/>
    <property type="evidence" value="ECO:0007669"/>
    <property type="project" value="RHEA"/>
</dbReference>
<dbReference type="GO" id="GO:0050511">
    <property type="term" value="F:undecaprenyldiphospho-muramoylpentapeptide beta-N-acetylglucosaminyltransferase activity"/>
    <property type="evidence" value="ECO:0007669"/>
    <property type="project" value="UniProtKB-UniRule"/>
</dbReference>
<dbReference type="GO" id="GO:0005975">
    <property type="term" value="P:carbohydrate metabolic process"/>
    <property type="evidence" value="ECO:0007669"/>
    <property type="project" value="InterPro"/>
</dbReference>
<dbReference type="GO" id="GO:0051301">
    <property type="term" value="P:cell division"/>
    <property type="evidence" value="ECO:0007669"/>
    <property type="project" value="UniProtKB-KW"/>
</dbReference>
<dbReference type="GO" id="GO:0071555">
    <property type="term" value="P:cell wall organization"/>
    <property type="evidence" value="ECO:0007669"/>
    <property type="project" value="UniProtKB-KW"/>
</dbReference>
<dbReference type="GO" id="GO:0030259">
    <property type="term" value="P:lipid glycosylation"/>
    <property type="evidence" value="ECO:0007669"/>
    <property type="project" value="UniProtKB-UniRule"/>
</dbReference>
<dbReference type="GO" id="GO:0009252">
    <property type="term" value="P:peptidoglycan biosynthetic process"/>
    <property type="evidence" value="ECO:0007669"/>
    <property type="project" value="UniProtKB-UniRule"/>
</dbReference>
<dbReference type="GO" id="GO:0008360">
    <property type="term" value="P:regulation of cell shape"/>
    <property type="evidence" value="ECO:0007669"/>
    <property type="project" value="UniProtKB-KW"/>
</dbReference>
<dbReference type="CDD" id="cd03785">
    <property type="entry name" value="GT28_MurG"/>
    <property type="match status" value="1"/>
</dbReference>
<dbReference type="FunFam" id="3.40.50.2000:FF:000016">
    <property type="entry name" value="UDP-N-acetylglucosamine--N-acetylmuramyl-(pentapeptide) pyrophosphoryl-undecaprenol N-acetylglucosamine transferase"/>
    <property type="match status" value="1"/>
</dbReference>
<dbReference type="FunFam" id="3.40.50.2000:FF:000018">
    <property type="entry name" value="UDP-N-acetylglucosamine--N-acetylmuramyl-(pentapeptide) pyrophosphoryl-undecaprenol N-acetylglucosamine transferase"/>
    <property type="match status" value="1"/>
</dbReference>
<dbReference type="Gene3D" id="3.40.50.2000">
    <property type="entry name" value="Glycogen Phosphorylase B"/>
    <property type="match status" value="2"/>
</dbReference>
<dbReference type="HAMAP" id="MF_00033">
    <property type="entry name" value="MurG"/>
    <property type="match status" value="1"/>
</dbReference>
<dbReference type="InterPro" id="IPR006009">
    <property type="entry name" value="GlcNAc_MurG"/>
</dbReference>
<dbReference type="InterPro" id="IPR007235">
    <property type="entry name" value="Glyco_trans_28_C"/>
</dbReference>
<dbReference type="InterPro" id="IPR004276">
    <property type="entry name" value="GlycoTrans_28_N"/>
</dbReference>
<dbReference type="NCBIfam" id="TIGR01133">
    <property type="entry name" value="murG"/>
    <property type="match status" value="1"/>
</dbReference>
<dbReference type="PANTHER" id="PTHR21015:SF22">
    <property type="entry name" value="GLYCOSYLTRANSFERASE"/>
    <property type="match status" value="1"/>
</dbReference>
<dbReference type="PANTHER" id="PTHR21015">
    <property type="entry name" value="UDP-N-ACETYLGLUCOSAMINE--N-ACETYLMURAMYL-(PENTAPEPTIDE) PYROPHOSPHORYL-UNDECAPRENOL N-ACETYLGLUCOSAMINE TRANSFERASE 1"/>
    <property type="match status" value="1"/>
</dbReference>
<dbReference type="Pfam" id="PF04101">
    <property type="entry name" value="Glyco_tran_28_C"/>
    <property type="match status" value="1"/>
</dbReference>
<dbReference type="Pfam" id="PF03033">
    <property type="entry name" value="Glyco_transf_28"/>
    <property type="match status" value="1"/>
</dbReference>
<dbReference type="SUPFAM" id="SSF53756">
    <property type="entry name" value="UDP-Glycosyltransferase/glycogen phosphorylase"/>
    <property type="match status" value="1"/>
</dbReference>
<sequence length="355" mass="37964">MSGQPKRLMVMAGGTGGHVFPGLAVAHHLMAQGWQVRWLGTADRMEADLVPKHGIEIDFIRISGLRGKGVKALLLAPVRIFNAWRQARAIMKRFKPDVVLGMGGYVSGPGGLAAWSLGIPVVLHEQNGIAGLTNKWLAKIASRVMQAFPGAFPKAEVVGNPVRTDVLALPLPQARLAGREGPVRVLVVGGSQGARILNQTMPQVAARLGDAVTIWHQSGKGAQAEVQQAYAAASQPQHKVTEFIDDMAAAYAWADVVVCRSGALTVSEIAAAGLPALFVPFQHKDRQQYWNALPLEKAGAAKILEQPQFTVDAVSETLKGWDRATLLEMAERARAAAIPDATERVADEVRAVARA</sequence>
<proteinExistence type="inferred from homology"/>
<organism>
    <name type="scientific">Cronobacter sakazakii (strain ATCC BAA-894)</name>
    <name type="common">Enterobacter sakazakii</name>
    <dbReference type="NCBI Taxonomy" id="290339"/>
    <lineage>
        <taxon>Bacteria</taxon>
        <taxon>Pseudomonadati</taxon>
        <taxon>Pseudomonadota</taxon>
        <taxon>Gammaproteobacteria</taxon>
        <taxon>Enterobacterales</taxon>
        <taxon>Enterobacteriaceae</taxon>
        <taxon>Cronobacter</taxon>
    </lineage>
</organism>
<name>MURG_CROS8</name>
<reference key="1">
    <citation type="journal article" date="2010" name="PLoS ONE">
        <title>Genome sequence of Cronobacter sakazakii BAA-894 and comparative genomic hybridization analysis with other Cronobacter species.</title>
        <authorList>
            <person name="Kucerova E."/>
            <person name="Clifton S.W."/>
            <person name="Xia X.Q."/>
            <person name="Long F."/>
            <person name="Porwollik S."/>
            <person name="Fulton L."/>
            <person name="Fronick C."/>
            <person name="Minx P."/>
            <person name="Kyung K."/>
            <person name="Warren W."/>
            <person name="Fulton R."/>
            <person name="Feng D."/>
            <person name="Wollam A."/>
            <person name="Shah N."/>
            <person name="Bhonagiri V."/>
            <person name="Nash W.E."/>
            <person name="Hallsworth-Pepin K."/>
            <person name="Wilson R.K."/>
            <person name="McClelland M."/>
            <person name="Forsythe S.J."/>
        </authorList>
    </citation>
    <scope>NUCLEOTIDE SEQUENCE [LARGE SCALE GENOMIC DNA]</scope>
    <source>
        <strain>ATCC BAA-894</strain>
    </source>
</reference>
<evidence type="ECO:0000255" key="1">
    <source>
        <dbReference type="HAMAP-Rule" id="MF_00033"/>
    </source>
</evidence>